<organism>
    <name type="scientific">Streptococcus thermophilus (strain CNRZ 1066)</name>
    <dbReference type="NCBI Taxonomy" id="299768"/>
    <lineage>
        <taxon>Bacteria</taxon>
        <taxon>Bacillati</taxon>
        <taxon>Bacillota</taxon>
        <taxon>Bacilli</taxon>
        <taxon>Lactobacillales</taxon>
        <taxon>Streptococcaceae</taxon>
        <taxon>Streptococcus</taxon>
    </lineage>
</organism>
<comment type="function">
    <text evidence="1">Binds 23S rRNA and is also seen to make contacts with the A and possibly P site tRNAs.</text>
</comment>
<comment type="subunit">
    <text evidence="1">Part of the 50S ribosomal subunit.</text>
</comment>
<comment type="similarity">
    <text evidence="1">Belongs to the universal ribosomal protein uL16 family.</text>
</comment>
<name>RL16_STRT1</name>
<proteinExistence type="inferred from homology"/>
<reference key="1">
    <citation type="journal article" date="2004" name="Nat. Biotechnol.">
        <title>Complete sequence and comparative genome analysis of the dairy bacterium Streptococcus thermophilus.</title>
        <authorList>
            <person name="Bolotin A."/>
            <person name="Quinquis B."/>
            <person name="Renault P."/>
            <person name="Sorokin A."/>
            <person name="Ehrlich S.D."/>
            <person name="Kulakauskas S."/>
            <person name="Lapidus A."/>
            <person name="Goltsman E."/>
            <person name="Mazur M."/>
            <person name="Pusch G.D."/>
            <person name="Fonstein M."/>
            <person name="Overbeek R."/>
            <person name="Kyprides N."/>
            <person name="Purnelle B."/>
            <person name="Prozzi D."/>
            <person name="Ngui K."/>
            <person name="Masuy D."/>
            <person name="Hancy F."/>
            <person name="Burteau S."/>
            <person name="Boutry M."/>
            <person name="Delcour J."/>
            <person name="Goffeau A."/>
            <person name="Hols P."/>
        </authorList>
    </citation>
    <scope>NUCLEOTIDE SEQUENCE [LARGE SCALE GENOMIC DNA]</scope>
    <source>
        <strain>CNRZ 1066</strain>
    </source>
</reference>
<evidence type="ECO:0000255" key="1">
    <source>
        <dbReference type="HAMAP-Rule" id="MF_01342"/>
    </source>
</evidence>
<evidence type="ECO:0000305" key="2"/>
<feature type="chain" id="PRO_0000062225" description="Large ribosomal subunit protein uL16">
    <location>
        <begin position="1"/>
        <end position="137"/>
    </location>
</feature>
<gene>
    <name evidence="1" type="primary">rplP</name>
    <name type="ordered locus">str1927</name>
</gene>
<protein>
    <recommendedName>
        <fullName evidence="1">Large ribosomal subunit protein uL16</fullName>
    </recommendedName>
    <alternativeName>
        <fullName evidence="2">50S ribosomal protein L16</fullName>
    </alternativeName>
</protein>
<dbReference type="EMBL" id="CP000024">
    <property type="protein sequence ID" value="AAV63440.1"/>
    <property type="molecule type" value="Genomic_DNA"/>
</dbReference>
<dbReference type="RefSeq" id="WP_011226664.1">
    <property type="nucleotide sequence ID" value="NC_006449.1"/>
</dbReference>
<dbReference type="SMR" id="Q5LXR8"/>
<dbReference type="GeneID" id="66899655"/>
<dbReference type="KEGG" id="stc:str1927"/>
<dbReference type="HOGENOM" id="CLU_078858_2_1_9"/>
<dbReference type="GO" id="GO:0022625">
    <property type="term" value="C:cytosolic large ribosomal subunit"/>
    <property type="evidence" value="ECO:0007669"/>
    <property type="project" value="TreeGrafter"/>
</dbReference>
<dbReference type="GO" id="GO:0019843">
    <property type="term" value="F:rRNA binding"/>
    <property type="evidence" value="ECO:0007669"/>
    <property type="project" value="UniProtKB-UniRule"/>
</dbReference>
<dbReference type="GO" id="GO:0003735">
    <property type="term" value="F:structural constituent of ribosome"/>
    <property type="evidence" value="ECO:0007669"/>
    <property type="project" value="InterPro"/>
</dbReference>
<dbReference type="GO" id="GO:0000049">
    <property type="term" value="F:tRNA binding"/>
    <property type="evidence" value="ECO:0007669"/>
    <property type="project" value="UniProtKB-KW"/>
</dbReference>
<dbReference type="GO" id="GO:0006412">
    <property type="term" value="P:translation"/>
    <property type="evidence" value="ECO:0007669"/>
    <property type="project" value="UniProtKB-UniRule"/>
</dbReference>
<dbReference type="CDD" id="cd01433">
    <property type="entry name" value="Ribosomal_L16_L10e"/>
    <property type="match status" value="1"/>
</dbReference>
<dbReference type="FunFam" id="3.90.1170.10:FF:000001">
    <property type="entry name" value="50S ribosomal protein L16"/>
    <property type="match status" value="1"/>
</dbReference>
<dbReference type="Gene3D" id="3.90.1170.10">
    <property type="entry name" value="Ribosomal protein L10e/L16"/>
    <property type="match status" value="1"/>
</dbReference>
<dbReference type="HAMAP" id="MF_01342">
    <property type="entry name" value="Ribosomal_uL16"/>
    <property type="match status" value="1"/>
</dbReference>
<dbReference type="InterPro" id="IPR047873">
    <property type="entry name" value="Ribosomal_uL16"/>
</dbReference>
<dbReference type="InterPro" id="IPR000114">
    <property type="entry name" value="Ribosomal_uL16_bact-type"/>
</dbReference>
<dbReference type="InterPro" id="IPR020798">
    <property type="entry name" value="Ribosomal_uL16_CS"/>
</dbReference>
<dbReference type="InterPro" id="IPR016180">
    <property type="entry name" value="Ribosomal_uL16_dom"/>
</dbReference>
<dbReference type="InterPro" id="IPR036920">
    <property type="entry name" value="Ribosomal_uL16_sf"/>
</dbReference>
<dbReference type="NCBIfam" id="TIGR01164">
    <property type="entry name" value="rplP_bact"/>
    <property type="match status" value="1"/>
</dbReference>
<dbReference type="PANTHER" id="PTHR12220">
    <property type="entry name" value="50S/60S RIBOSOMAL PROTEIN L16"/>
    <property type="match status" value="1"/>
</dbReference>
<dbReference type="PANTHER" id="PTHR12220:SF13">
    <property type="entry name" value="LARGE RIBOSOMAL SUBUNIT PROTEIN UL16M"/>
    <property type="match status" value="1"/>
</dbReference>
<dbReference type="Pfam" id="PF00252">
    <property type="entry name" value="Ribosomal_L16"/>
    <property type="match status" value="1"/>
</dbReference>
<dbReference type="PRINTS" id="PR00060">
    <property type="entry name" value="RIBOSOMALL16"/>
</dbReference>
<dbReference type="SUPFAM" id="SSF54686">
    <property type="entry name" value="Ribosomal protein L16p/L10e"/>
    <property type="match status" value="1"/>
</dbReference>
<dbReference type="PROSITE" id="PS00586">
    <property type="entry name" value="RIBOSOMAL_L16_1"/>
    <property type="match status" value="1"/>
</dbReference>
<dbReference type="PROSITE" id="PS00701">
    <property type="entry name" value="RIBOSOMAL_L16_2"/>
    <property type="match status" value="1"/>
</dbReference>
<accession>Q5LXR8</accession>
<keyword id="KW-0687">Ribonucleoprotein</keyword>
<keyword id="KW-0689">Ribosomal protein</keyword>
<keyword id="KW-0694">RNA-binding</keyword>
<keyword id="KW-0699">rRNA-binding</keyword>
<keyword id="KW-0820">tRNA-binding</keyword>
<sequence length="137" mass="15456">MLVPKRVKHRREFRGKMRGEAKGGKEVSFGEYGLQATTSHWITNRQIEAARIAMTRYMKRGGKVWIKIFPHKSYTAKAIGVRMGSGKGAPEGWVAPVKRGKVMFEIAGVSEEVAREAFRLASHKLPVKSKFVKREAE</sequence>